<proteinExistence type="inferred from homology"/>
<reference key="1">
    <citation type="submission" date="2009-05" db="EMBL/GenBank/DDBJ databases">
        <title>Complete sequence of Tolumonas auensis DSM 9187.</title>
        <authorList>
            <consortium name="US DOE Joint Genome Institute"/>
            <person name="Lucas S."/>
            <person name="Copeland A."/>
            <person name="Lapidus A."/>
            <person name="Glavina del Rio T."/>
            <person name="Tice H."/>
            <person name="Bruce D."/>
            <person name="Goodwin L."/>
            <person name="Pitluck S."/>
            <person name="Chertkov O."/>
            <person name="Brettin T."/>
            <person name="Detter J.C."/>
            <person name="Han C."/>
            <person name="Larimer F."/>
            <person name="Land M."/>
            <person name="Hauser L."/>
            <person name="Kyrpides N."/>
            <person name="Mikhailova N."/>
            <person name="Spring S."/>
            <person name="Beller H."/>
        </authorList>
    </citation>
    <scope>NUCLEOTIDE SEQUENCE [LARGE SCALE GENOMIC DNA]</scope>
    <source>
        <strain>DSM 9187 / NBRC 110442 / TA 4</strain>
    </source>
</reference>
<protein>
    <recommendedName>
        <fullName evidence="1">Chaperonin GroEL</fullName>
        <ecNumber evidence="1">5.6.1.7</ecNumber>
    </recommendedName>
    <alternativeName>
        <fullName evidence="1">60 kDa chaperonin</fullName>
    </alternativeName>
    <alternativeName>
        <fullName evidence="1">Chaperonin-60</fullName>
        <shortName evidence="1">Cpn60</shortName>
    </alternativeName>
</protein>
<dbReference type="EC" id="5.6.1.7" evidence="1"/>
<dbReference type="EMBL" id="CP001616">
    <property type="protein sequence ID" value="ACQ94406.1"/>
    <property type="molecule type" value="Genomic_DNA"/>
</dbReference>
<dbReference type="RefSeq" id="WP_015879855.1">
    <property type="nucleotide sequence ID" value="NC_012691.1"/>
</dbReference>
<dbReference type="SMR" id="C4LCA2"/>
<dbReference type="STRING" id="595494.Tola_2813"/>
<dbReference type="KEGG" id="tau:Tola_2813"/>
<dbReference type="eggNOG" id="COG0459">
    <property type="taxonomic scope" value="Bacteria"/>
</dbReference>
<dbReference type="HOGENOM" id="CLU_016503_3_0_6"/>
<dbReference type="OrthoDB" id="9766614at2"/>
<dbReference type="Proteomes" id="UP000009073">
    <property type="component" value="Chromosome"/>
</dbReference>
<dbReference type="GO" id="GO:0005737">
    <property type="term" value="C:cytoplasm"/>
    <property type="evidence" value="ECO:0007669"/>
    <property type="project" value="UniProtKB-SubCell"/>
</dbReference>
<dbReference type="GO" id="GO:0005524">
    <property type="term" value="F:ATP binding"/>
    <property type="evidence" value="ECO:0007669"/>
    <property type="project" value="UniProtKB-UniRule"/>
</dbReference>
<dbReference type="GO" id="GO:0140662">
    <property type="term" value="F:ATP-dependent protein folding chaperone"/>
    <property type="evidence" value="ECO:0007669"/>
    <property type="project" value="InterPro"/>
</dbReference>
<dbReference type="GO" id="GO:0016853">
    <property type="term" value="F:isomerase activity"/>
    <property type="evidence" value="ECO:0007669"/>
    <property type="project" value="UniProtKB-KW"/>
</dbReference>
<dbReference type="GO" id="GO:0051082">
    <property type="term" value="F:unfolded protein binding"/>
    <property type="evidence" value="ECO:0007669"/>
    <property type="project" value="UniProtKB-UniRule"/>
</dbReference>
<dbReference type="GO" id="GO:0042026">
    <property type="term" value="P:protein refolding"/>
    <property type="evidence" value="ECO:0007669"/>
    <property type="project" value="UniProtKB-UniRule"/>
</dbReference>
<dbReference type="CDD" id="cd03344">
    <property type="entry name" value="GroEL"/>
    <property type="match status" value="1"/>
</dbReference>
<dbReference type="FunFam" id="1.10.560.10:FF:000001">
    <property type="entry name" value="60 kDa chaperonin"/>
    <property type="match status" value="1"/>
</dbReference>
<dbReference type="FunFam" id="3.50.7.10:FF:000001">
    <property type="entry name" value="60 kDa chaperonin"/>
    <property type="match status" value="1"/>
</dbReference>
<dbReference type="Gene3D" id="3.50.7.10">
    <property type="entry name" value="GroEL"/>
    <property type="match status" value="1"/>
</dbReference>
<dbReference type="Gene3D" id="1.10.560.10">
    <property type="entry name" value="GroEL-like equatorial domain"/>
    <property type="match status" value="1"/>
</dbReference>
<dbReference type="Gene3D" id="3.30.260.10">
    <property type="entry name" value="TCP-1-like chaperonin intermediate domain"/>
    <property type="match status" value="1"/>
</dbReference>
<dbReference type="HAMAP" id="MF_00600">
    <property type="entry name" value="CH60"/>
    <property type="match status" value="1"/>
</dbReference>
<dbReference type="InterPro" id="IPR018370">
    <property type="entry name" value="Chaperonin_Cpn60_CS"/>
</dbReference>
<dbReference type="InterPro" id="IPR001844">
    <property type="entry name" value="Cpn60/GroEL"/>
</dbReference>
<dbReference type="InterPro" id="IPR002423">
    <property type="entry name" value="Cpn60/GroEL/TCP-1"/>
</dbReference>
<dbReference type="InterPro" id="IPR027409">
    <property type="entry name" value="GroEL-like_apical_dom_sf"/>
</dbReference>
<dbReference type="InterPro" id="IPR027413">
    <property type="entry name" value="GROEL-like_equatorial_sf"/>
</dbReference>
<dbReference type="InterPro" id="IPR027410">
    <property type="entry name" value="TCP-1-like_intermed_sf"/>
</dbReference>
<dbReference type="NCBIfam" id="TIGR02348">
    <property type="entry name" value="GroEL"/>
    <property type="match status" value="1"/>
</dbReference>
<dbReference type="NCBIfam" id="NF000592">
    <property type="entry name" value="PRK00013.1"/>
    <property type="match status" value="1"/>
</dbReference>
<dbReference type="NCBIfam" id="NF009487">
    <property type="entry name" value="PRK12849.1"/>
    <property type="match status" value="1"/>
</dbReference>
<dbReference type="NCBIfam" id="NF009488">
    <property type="entry name" value="PRK12850.1"/>
    <property type="match status" value="1"/>
</dbReference>
<dbReference type="NCBIfam" id="NF009489">
    <property type="entry name" value="PRK12851.1"/>
    <property type="match status" value="1"/>
</dbReference>
<dbReference type="PANTHER" id="PTHR45633">
    <property type="entry name" value="60 KDA HEAT SHOCK PROTEIN, MITOCHONDRIAL"/>
    <property type="match status" value="1"/>
</dbReference>
<dbReference type="Pfam" id="PF00118">
    <property type="entry name" value="Cpn60_TCP1"/>
    <property type="match status" value="1"/>
</dbReference>
<dbReference type="PRINTS" id="PR00298">
    <property type="entry name" value="CHAPERONIN60"/>
</dbReference>
<dbReference type="SUPFAM" id="SSF52029">
    <property type="entry name" value="GroEL apical domain-like"/>
    <property type="match status" value="1"/>
</dbReference>
<dbReference type="SUPFAM" id="SSF48592">
    <property type="entry name" value="GroEL equatorial domain-like"/>
    <property type="match status" value="1"/>
</dbReference>
<dbReference type="SUPFAM" id="SSF54849">
    <property type="entry name" value="GroEL-intermediate domain like"/>
    <property type="match status" value="1"/>
</dbReference>
<dbReference type="PROSITE" id="PS00296">
    <property type="entry name" value="CHAPERONINS_CPN60"/>
    <property type="match status" value="1"/>
</dbReference>
<accession>C4LCA2</accession>
<feature type="chain" id="PRO_1000212211" description="Chaperonin GroEL">
    <location>
        <begin position="1"/>
        <end position="545"/>
    </location>
</feature>
<feature type="binding site" evidence="1">
    <location>
        <begin position="30"/>
        <end position="33"/>
    </location>
    <ligand>
        <name>ATP</name>
        <dbReference type="ChEBI" id="CHEBI:30616"/>
    </ligand>
</feature>
<feature type="binding site" evidence="1">
    <location>
        <position position="51"/>
    </location>
    <ligand>
        <name>ATP</name>
        <dbReference type="ChEBI" id="CHEBI:30616"/>
    </ligand>
</feature>
<feature type="binding site" evidence="1">
    <location>
        <begin position="87"/>
        <end position="91"/>
    </location>
    <ligand>
        <name>ATP</name>
        <dbReference type="ChEBI" id="CHEBI:30616"/>
    </ligand>
</feature>
<feature type="binding site" evidence="1">
    <location>
        <position position="415"/>
    </location>
    <ligand>
        <name>ATP</name>
        <dbReference type="ChEBI" id="CHEBI:30616"/>
    </ligand>
</feature>
<feature type="binding site" evidence="1">
    <location>
        <begin position="479"/>
        <end position="481"/>
    </location>
    <ligand>
        <name>ATP</name>
        <dbReference type="ChEBI" id="CHEBI:30616"/>
    </ligand>
</feature>
<feature type="binding site" evidence="1">
    <location>
        <position position="495"/>
    </location>
    <ligand>
        <name>ATP</name>
        <dbReference type="ChEBI" id="CHEBI:30616"/>
    </ligand>
</feature>
<evidence type="ECO:0000255" key="1">
    <source>
        <dbReference type="HAMAP-Rule" id="MF_00600"/>
    </source>
</evidence>
<comment type="function">
    <text evidence="1">Together with its co-chaperonin GroES, plays an essential role in assisting protein folding. The GroEL-GroES system forms a nano-cage that allows encapsulation of the non-native substrate proteins and provides a physical environment optimized to promote and accelerate protein folding.</text>
</comment>
<comment type="catalytic activity">
    <reaction evidence="1">
        <text>ATP + H2O + a folded polypeptide = ADP + phosphate + an unfolded polypeptide.</text>
        <dbReference type="EC" id="5.6.1.7"/>
    </reaction>
</comment>
<comment type="subunit">
    <text evidence="1">Forms a cylinder of 14 subunits composed of two heptameric rings stacked back-to-back. Interacts with the co-chaperonin GroES.</text>
</comment>
<comment type="subcellular location">
    <subcellularLocation>
        <location evidence="1">Cytoplasm</location>
    </subcellularLocation>
</comment>
<comment type="similarity">
    <text evidence="1">Belongs to the chaperonin (HSP60) family.</text>
</comment>
<keyword id="KW-0067">ATP-binding</keyword>
<keyword id="KW-0143">Chaperone</keyword>
<keyword id="KW-0963">Cytoplasm</keyword>
<keyword id="KW-0413">Isomerase</keyword>
<keyword id="KW-0547">Nucleotide-binding</keyword>
<keyword id="KW-1185">Reference proteome</keyword>
<sequence length="545" mass="57398">MAAKDVKFGSDARIKMLEGVNVLANAVKVTLGPKGRNVVLDKSFGAPTITKDGVSVAKEIELEDKFQNMGAQMVKEVASQANDAAGDGTTTATVLAQSIITEGLKAVAAGMNPMDLKRGIDKAVLAAVEELKTLSVPCADTKAIAQVGTISANSDENVGKLIAEAMDKVGRDGVITVEDGQGLQDELAVVEGMQFDRGYLSPYFINKQDTASVELDDPFILLVDKKVSNIREMLSVLEGVAKAGKPLVIIAEDVEGEALATLVVNTMRGIVKVAAVKAPGFGDRRKAMLQDIAILTAGTVISEEIGMELEKATLEELGRAKRIVITKENTTIIDGVGEAATIEARIAQIRQQIEESSSDYDKEKLQERVAKLAGGVAVIKVGATTEVEMKEKKARVEDALHATRAAVEEGVVAGGGVALVRAAAKLADLKGDNEDQTVGIRVALRAMESPLRQIVDNAGEEPSVVANRVREGEGNFGYNAATEVYGDMLEMGILDPTKVTRLALQFAASVAGLMITTECMITDAPKKDAPAMPDMGGMGGMGGMM</sequence>
<gene>
    <name evidence="1" type="primary">groEL</name>
    <name evidence="1" type="synonym">groL</name>
    <name type="ordered locus">Tola_2813</name>
</gene>
<organism>
    <name type="scientific">Tolumonas auensis (strain DSM 9187 / NBRC 110442 / TA 4)</name>
    <dbReference type="NCBI Taxonomy" id="595494"/>
    <lineage>
        <taxon>Bacteria</taxon>
        <taxon>Pseudomonadati</taxon>
        <taxon>Pseudomonadota</taxon>
        <taxon>Gammaproteobacteria</taxon>
        <taxon>Aeromonadales</taxon>
        <taxon>Aeromonadaceae</taxon>
        <taxon>Tolumonas</taxon>
    </lineage>
</organism>
<name>CH60_TOLAT</name>